<protein>
    <recommendedName>
        <fullName evidence="1">Large ribosomal subunit protein bL21</fullName>
    </recommendedName>
    <alternativeName>
        <fullName evidence="2">50S ribosomal protein L21</fullName>
    </alternativeName>
</protein>
<name>RL21_POLAQ</name>
<reference key="1">
    <citation type="journal article" date="2012" name="Stand. Genomic Sci.">
        <title>Complete genome sequence of Polynucleobacter necessarius subsp. asymbioticus type strain (QLW-P1DMWA-1(T)).</title>
        <authorList>
            <person name="Meincke L."/>
            <person name="Copeland A."/>
            <person name="Lapidus A."/>
            <person name="Lucas S."/>
            <person name="Berry K.W."/>
            <person name="Del Rio T.G."/>
            <person name="Hammon N."/>
            <person name="Dalin E."/>
            <person name="Tice H."/>
            <person name="Pitluck S."/>
            <person name="Richardson P."/>
            <person name="Bruce D."/>
            <person name="Goodwin L."/>
            <person name="Han C."/>
            <person name="Tapia R."/>
            <person name="Detter J.C."/>
            <person name="Schmutz J."/>
            <person name="Brettin T."/>
            <person name="Larimer F."/>
            <person name="Land M."/>
            <person name="Hauser L."/>
            <person name="Kyrpides N.C."/>
            <person name="Ivanova N."/>
            <person name="Goker M."/>
            <person name="Woyke T."/>
            <person name="Wu Q.L."/>
            <person name="Pockl M."/>
            <person name="Hahn M.W."/>
            <person name="Klenk H.P."/>
        </authorList>
    </citation>
    <scope>NUCLEOTIDE SEQUENCE [LARGE SCALE GENOMIC DNA]</scope>
    <source>
        <strain>DSM 18221 / CIP 109841 / QLW-P1DMWA-1</strain>
    </source>
</reference>
<evidence type="ECO:0000255" key="1">
    <source>
        <dbReference type="HAMAP-Rule" id="MF_01363"/>
    </source>
</evidence>
<evidence type="ECO:0000305" key="2"/>
<feature type="chain" id="PRO_1000086990" description="Large ribosomal subunit protein bL21">
    <location>
        <begin position="1"/>
        <end position="103"/>
    </location>
</feature>
<dbReference type="EMBL" id="CP000655">
    <property type="protein sequence ID" value="ABP33415.1"/>
    <property type="molecule type" value="Genomic_DNA"/>
</dbReference>
<dbReference type="RefSeq" id="WP_011902040.1">
    <property type="nucleotide sequence ID" value="NC_009379.1"/>
</dbReference>
<dbReference type="SMR" id="A4SVA1"/>
<dbReference type="GeneID" id="66831543"/>
<dbReference type="KEGG" id="pnu:Pnuc_0194"/>
<dbReference type="eggNOG" id="COG0261">
    <property type="taxonomic scope" value="Bacteria"/>
</dbReference>
<dbReference type="HOGENOM" id="CLU_061463_3_2_4"/>
<dbReference type="Proteomes" id="UP000000231">
    <property type="component" value="Chromosome"/>
</dbReference>
<dbReference type="GO" id="GO:0005737">
    <property type="term" value="C:cytoplasm"/>
    <property type="evidence" value="ECO:0007669"/>
    <property type="project" value="UniProtKB-ARBA"/>
</dbReference>
<dbReference type="GO" id="GO:1990904">
    <property type="term" value="C:ribonucleoprotein complex"/>
    <property type="evidence" value="ECO:0007669"/>
    <property type="project" value="UniProtKB-KW"/>
</dbReference>
<dbReference type="GO" id="GO:0005840">
    <property type="term" value="C:ribosome"/>
    <property type="evidence" value="ECO:0007669"/>
    <property type="project" value="UniProtKB-KW"/>
</dbReference>
<dbReference type="GO" id="GO:0019843">
    <property type="term" value="F:rRNA binding"/>
    <property type="evidence" value="ECO:0007669"/>
    <property type="project" value="UniProtKB-UniRule"/>
</dbReference>
<dbReference type="GO" id="GO:0003735">
    <property type="term" value="F:structural constituent of ribosome"/>
    <property type="evidence" value="ECO:0007669"/>
    <property type="project" value="InterPro"/>
</dbReference>
<dbReference type="GO" id="GO:0006412">
    <property type="term" value="P:translation"/>
    <property type="evidence" value="ECO:0007669"/>
    <property type="project" value="UniProtKB-UniRule"/>
</dbReference>
<dbReference type="HAMAP" id="MF_01363">
    <property type="entry name" value="Ribosomal_bL21"/>
    <property type="match status" value="1"/>
</dbReference>
<dbReference type="InterPro" id="IPR028909">
    <property type="entry name" value="bL21-like"/>
</dbReference>
<dbReference type="InterPro" id="IPR036164">
    <property type="entry name" value="bL21-like_sf"/>
</dbReference>
<dbReference type="InterPro" id="IPR001787">
    <property type="entry name" value="Ribosomal_bL21"/>
</dbReference>
<dbReference type="InterPro" id="IPR018258">
    <property type="entry name" value="Ribosomal_bL21_CS"/>
</dbReference>
<dbReference type="NCBIfam" id="TIGR00061">
    <property type="entry name" value="L21"/>
    <property type="match status" value="1"/>
</dbReference>
<dbReference type="PANTHER" id="PTHR21349">
    <property type="entry name" value="50S RIBOSOMAL PROTEIN L21"/>
    <property type="match status" value="1"/>
</dbReference>
<dbReference type="PANTHER" id="PTHR21349:SF0">
    <property type="entry name" value="LARGE RIBOSOMAL SUBUNIT PROTEIN BL21M"/>
    <property type="match status" value="1"/>
</dbReference>
<dbReference type="Pfam" id="PF00829">
    <property type="entry name" value="Ribosomal_L21p"/>
    <property type="match status" value="1"/>
</dbReference>
<dbReference type="SUPFAM" id="SSF141091">
    <property type="entry name" value="L21p-like"/>
    <property type="match status" value="1"/>
</dbReference>
<dbReference type="PROSITE" id="PS01169">
    <property type="entry name" value="RIBOSOMAL_L21"/>
    <property type="match status" value="1"/>
</dbReference>
<proteinExistence type="inferred from homology"/>
<sequence length="103" mass="11340">MYAVIKTGGKQYKVAAGEKLKIEQIPAEIGSEITLDQVLAVGEGASLKLGDPLVNGAAVMATVVSQGRHDKVTIFKMRRRKHYQKHQGHRQNFTEILINTIKA</sequence>
<keyword id="KW-1185">Reference proteome</keyword>
<keyword id="KW-0687">Ribonucleoprotein</keyword>
<keyword id="KW-0689">Ribosomal protein</keyword>
<keyword id="KW-0694">RNA-binding</keyword>
<keyword id="KW-0699">rRNA-binding</keyword>
<comment type="function">
    <text evidence="1">This protein binds to 23S rRNA in the presence of protein L20.</text>
</comment>
<comment type="subunit">
    <text evidence="1">Part of the 50S ribosomal subunit. Contacts protein L20.</text>
</comment>
<comment type="similarity">
    <text evidence="1">Belongs to the bacterial ribosomal protein bL21 family.</text>
</comment>
<organism>
    <name type="scientific">Polynucleobacter asymbioticus (strain DSM 18221 / CIP 109841 / QLW-P1DMWA-1)</name>
    <name type="common">Polynucleobacter necessarius subsp. asymbioticus</name>
    <dbReference type="NCBI Taxonomy" id="312153"/>
    <lineage>
        <taxon>Bacteria</taxon>
        <taxon>Pseudomonadati</taxon>
        <taxon>Pseudomonadota</taxon>
        <taxon>Betaproteobacteria</taxon>
        <taxon>Burkholderiales</taxon>
        <taxon>Burkholderiaceae</taxon>
        <taxon>Polynucleobacter</taxon>
    </lineage>
</organism>
<accession>A4SVA1</accession>
<gene>
    <name evidence="1" type="primary">rplU</name>
    <name type="ordered locus">Pnuc_0194</name>
</gene>